<accession>Q9ZEU5</accession>
<proteinExistence type="inferred from homology"/>
<dbReference type="EMBL" id="AJ011104">
    <property type="protein sequence ID" value="CAA09486.1"/>
    <property type="molecule type" value="Genomic_DNA"/>
</dbReference>
<dbReference type="SMR" id="Q9ZEU5"/>
<dbReference type="GO" id="GO:0015935">
    <property type="term" value="C:small ribosomal subunit"/>
    <property type="evidence" value="ECO:0007669"/>
    <property type="project" value="InterPro"/>
</dbReference>
<dbReference type="GO" id="GO:0019843">
    <property type="term" value="F:rRNA binding"/>
    <property type="evidence" value="ECO:0007669"/>
    <property type="project" value="UniProtKB-KW"/>
</dbReference>
<dbReference type="GO" id="GO:0003735">
    <property type="term" value="F:structural constituent of ribosome"/>
    <property type="evidence" value="ECO:0007669"/>
    <property type="project" value="InterPro"/>
</dbReference>
<dbReference type="GO" id="GO:0000049">
    <property type="term" value="F:tRNA binding"/>
    <property type="evidence" value="ECO:0007669"/>
    <property type="project" value="UniProtKB-KW"/>
</dbReference>
<dbReference type="GO" id="GO:0006412">
    <property type="term" value="P:translation"/>
    <property type="evidence" value="ECO:0007669"/>
    <property type="project" value="InterPro"/>
</dbReference>
<dbReference type="Gene3D" id="1.10.455.10">
    <property type="entry name" value="Ribosomal protein S7 domain"/>
    <property type="match status" value="1"/>
</dbReference>
<dbReference type="InterPro" id="IPR000235">
    <property type="entry name" value="Ribosomal_uS7"/>
</dbReference>
<dbReference type="InterPro" id="IPR005717">
    <property type="entry name" value="Ribosomal_uS7_bac/org-type"/>
</dbReference>
<dbReference type="InterPro" id="IPR023798">
    <property type="entry name" value="Ribosomal_uS7_dom"/>
</dbReference>
<dbReference type="InterPro" id="IPR036823">
    <property type="entry name" value="Ribosomal_uS7_dom_sf"/>
</dbReference>
<dbReference type="NCBIfam" id="TIGR01029">
    <property type="entry name" value="rpsG_bact"/>
    <property type="match status" value="1"/>
</dbReference>
<dbReference type="PANTHER" id="PTHR11205">
    <property type="entry name" value="RIBOSOMAL PROTEIN S7"/>
    <property type="match status" value="1"/>
</dbReference>
<dbReference type="Pfam" id="PF00177">
    <property type="entry name" value="Ribosomal_S7"/>
    <property type="match status" value="1"/>
</dbReference>
<dbReference type="PIRSF" id="PIRSF002122">
    <property type="entry name" value="RPS7p_RPS7a_RPS5e_RPS7o"/>
    <property type="match status" value="1"/>
</dbReference>
<dbReference type="SUPFAM" id="SSF47973">
    <property type="entry name" value="Ribosomal protein S7"/>
    <property type="match status" value="1"/>
</dbReference>
<sequence>LKNIMPELEVRSRRIGGQKYQIPSEVRPERKQSLGLRWLVQFAQKRNEKTMQQKLAKEIIDAASGNGLAVKKREEIHRMAEANKSFAHYRW</sequence>
<comment type="function">
    <text evidence="1">One of the primary rRNA binding proteins, it binds directly to 16S rRNA where it nucleates assembly of the head domain of the 30S subunit. Is located at the subunit interface close to the decoding center, probably blocks exit of the E-site tRNA (By similarity).</text>
</comment>
<comment type="subunit">
    <text evidence="1">Part of the 30S ribosomal subunit. Contacts proteins S9 and S11 (By similarity).</text>
</comment>
<comment type="similarity">
    <text evidence="2">Belongs to the universal ribosomal protein uS7 family.</text>
</comment>
<organism>
    <name type="scientific">Apple proliferation phytoplasma</name>
    <dbReference type="NCBI Taxonomy" id="37692"/>
    <lineage>
        <taxon>Bacteria</taxon>
        <taxon>Bacillati</taxon>
        <taxon>Mycoplasmatota</taxon>
        <taxon>Mollicutes</taxon>
        <taxon>Acholeplasmatales</taxon>
        <taxon>Acholeplasmataceae</taxon>
        <taxon>Candidatus Phytoplasma</taxon>
        <taxon>16SrX (Apple proliferation group)</taxon>
    </lineage>
</organism>
<protein>
    <recommendedName>
        <fullName evidence="2">Small ribosomal subunit protein uS7</fullName>
    </recommendedName>
    <alternativeName>
        <fullName>30S ribosomal protein S7</fullName>
    </alternativeName>
</protein>
<feature type="chain" id="PRO_0000124206" description="Small ribosomal subunit protein uS7">
    <location>
        <begin position="1" status="less than"/>
        <end position="91"/>
    </location>
</feature>
<feature type="non-terminal residue">
    <location>
        <position position="1"/>
    </location>
</feature>
<name>RS7_APPPP</name>
<keyword id="KW-0687">Ribonucleoprotein</keyword>
<keyword id="KW-0689">Ribosomal protein</keyword>
<keyword id="KW-0694">RNA-binding</keyword>
<keyword id="KW-0699">rRNA-binding</keyword>
<keyword id="KW-0820">tRNA-binding</keyword>
<evidence type="ECO:0000250" key="1"/>
<evidence type="ECO:0000305" key="2"/>
<gene>
    <name type="primary">rpsG</name>
    <name type="synonym">rps7</name>
</gene>
<reference key="1">
    <citation type="journal article" date="1999" name="Gene">
        <title>Chromosomal organization and nucleotide sequence of the genes coding for the elongation factors G and Tu of the Apple proliferation phytoplasma.</title>
        <authorList>
            <person name="Berg M."/>
            <person name="Seemueller E."/>
        </authorList>
    </citation>
    <scope>NUCLEOTIDE SEQUENCE [GENOMIC DNA]</scope>
    <source>
        <strain>AT</strain>
    </source>
</reference>